<feature type="chain" id="PRO_1000020784" description="Glycerol kinase">
    <location>
        <begin position="1"/>
        <end position="494"/>
    </location>
</feature>
<feature type="binding site" evidence="1">
    <location>
        <position position="13"/>
    </location>
    <ligand>
        <name>ADP</name>
        <dbReference type="ChEBI" id="CHEBI:456216"/>
    </ligand>
</feature>
<feature type="binding site" evidence="1">
    <location>
        <position position="13"/>
    </location>
    <ligand>
        <name>ATP</name>
        <dbReference type="ChEBI" id="CHEBI:30616"/>
    </ligand>
</feature>
<feature type="binding site" evidence="1">
    <location>
        <position position="13"/>
    </location>
    <ligand>
        <name>sn-glycerol 3-phosphate</name>
        <dbReference type="ChEBI" id="CHEBI:57597"/>
    </ligand>
</feature>
<feature type="binding site" evidence="1">
    <location>
        <position position="14"/>
    </location>
    <ligand>
        <name>ATP</name>
        <dbReference type="ChEBI" id="CHEBI:30616"/>
    </ligand>
</feature>
<feature type="binding site" evidence="1">
    <location>
        <position position="15"/>
    </location>
    <ligand>
        <name>ATP</name>
        <dbReference type="ChEBI" id="CHEBI:30616"/>
    </ligand>
</feature>
<feature type="binding site" evidence="1">
    <location>
        <position position="17"/>
    </location>
    <ligand>
        <name>ADP</name>
        <dbReference type="ChEBI" id="CHEBI:456216"/>
    </ligand>
</feature>
<feature type="binding site" evidence="1">
    <location>
        <position position="83"/>
    </location>
    <ligand>
        <name>glycerol</name>
        <dbReference type="ChEBI" id="CHEBI:17754"/>
    </ligand>
</feature>
<feature type="binding site" evidence="1">
    <location>
        <position position="83"/>
    </location>
    <ligand>
        <name>sn-glycerol 3-phosphate</name>
        <dbReference type="ChEBI" id="CHEBI:57597"/>
    </ligand>
</feature>
<feature type="binding site" evidence="1">
    <location>
        <position position="84"/>
    </location>
    <ligand>
        <name>glycerol</name>
        <dbReference type="ChEBI" id="CHEBI:17754"/>
    </ligand>
</feature>
<feature type="binding site" evidence="1">
    <location>
        <position position="84"/>
    </location>
    <ligand>
        <name>sn-glycerol 3-phosphate</name>
        <dbReference type="ChEBI" id="CHEBI:57597"/>
    </ligand>
</feature>
<feature type="binding site" evidence="1">
    <location>
        <position position="135"/>
    </location>
    <ligand>
        <name>glycerol</name>
        <dbReference type="ChEBI" id="CHEBI:17754"/>
    </ligand>
</feature>
<feature type="binding site" evidence="1">
    <location>
        <position position="135"/>
    </location>
    <ligand>
        <name>sn-glycerol 3-phosphate</name>
        <dbReference type="ChEBI" id="CHEBI:57597"/>
    </ligand>
</feature>
<feature type="binding site" evidence="1">
    <location>
        <position position="244"/>
    </location>
    <ligand>
        <name>glycerol</name>
        <dbReference type="ChEBI" id="CHEBI:17754"/>
    </ligand>
</feature>
<feature type="binding site" evidence="1">
    <location>
        <position position="244"/>
    </location>
    <ligand>
        <name>sn-glycerol 3-phosphate</name>
        <dbReference type="ChEBI" id="CHEBI:57597"/>
    </ligand>
</feature>
<feature type="binding site" evidence="1">
    <location>
        <position position="245"/>
    </location>
    <ligand>
        <name>glycerol</name>
        <dbReference type="ChEBI" id="CHEBI:17754"/>
    </ligand>
</feature>
<feature type="binding site" evidence="1">
    <location>
        <position position="266"/>
    </location>
    <ligand>
        <name>ADP</name>
        <dbReference type="ChEBI" id="CHEBI:456216"/>
    </ligand>
</feature>
<feature type="binding site" evidence="1">
    <location>
        <position position="266"/>
    </location>
    <ligand>
        <name>ATP</name>
        <dbReference type="ChEBI" id="CHEBI:30616"/>
    </ligand>
</feature>
<feature type="binding site" evidence="1">
    <location>
        <position position="309"/>
    </location>
    <ligand>
        <name>ADP</name>
        <dbReference type="ChEBI" id="CHEBI:456216"/>
    </ligand>
</feature>
<feature type="binding site" evidence="1">
    <location>
        <position position="309"/>
    </location>
    <ligand>
        <name>ATP</name>
        <dbReference type="ChEBI" id="CHEBI:30616"/>
    </ligand>
</feature>
<feature type="binding site" evidence="1">
    <location>
        <position position="313"/>
    </location>
    <ligand>
        <name>ATP</name>
        <dbReference type="ChEBI" id="CHEBI:30616"/>
    </ligand>
</feature>
<feature type="binding site" evidence="1">
    <location>
        <position position="410"/>
    </location>
    <ligand>
        <name>ADP</name>
        <dbReference type="ChEBI" id="CHEBI:456216"/>
    </ligand>
</feature>
<feature type="binding site" evidence="1">
    <location>
        <position position="410"/>
    </location>
    <ligand>
        <name>ATP</name>
        <dbReference type="ChEBI" id="CHEBI:30616"/>
    </ligand>
</feature>
<feature type="binding site" evidence="1">
    <location>
        <position position="414"/>
    </location>
    <ligand>
        <name>ADP</name>
        <dbReference type="ChEBI" id="CHEBI:456216"/>
    </ligand>
</feature>
<evidence type="ECO:0000255" key="1">
    <source>
        <dbReference type="HAMAP-Rule" id="MF_00186"/>
    </source>
</evidence>
<sequence length="494" mass="54032">MQKKYVVALDQGTTSSRAIVFDHDANIVSVSQREFTQLYPNPGWVEHDPMEIWASQSSVLIESLARAGIHSDEVAAIGITNQRETTIIWEKATGKPVYNAIVWQCRRSSEICEQLKAQGLEDYVRENTGLLLDPYFSGTKIKWILDNVPDARAKAKRGELLFGTVDTWLLWKLTEGKVHVTDPTNAARTLLFNIHSLSWDTTLLEALDIPAAMLPEVRPSCSVYGTTRIAGEGSEIPLAGIAGDQQAALFGQLCVEPGMAKNTYGTGCFLLMNTGNKAVRSSHGLLTTVAVGAQGEVNYALEGSVFMGGATIQWLRDELGLIRDASDTEYFASKVADTNGVYLVPAFVGLGAPYWDPNARGALFGLTRGANRNHIIRAALESIAYQSKDLLDAMIKDSGERLKSLKVDGGAVANDFLMQFQADITDVEVLRPSVCETTALGAAFLAGLAVGFWTSVTELEYKACIDKHFKPNIDASQRERLYVDWQDAVARTRS</sequence>
<accession>Q0HZS9</accession>
<reference key="1">
    <citation type="submission" date="2006-08" db="EMBL/GenBank/DDBJ databases">
        <title>Complete sequence of chromosome 1 of Shewanella sp. MR-7.</title>
        <authorList>
            <person name="Copeland A."/>
            <person name="Lucas S."/>
            <person name="Lapidus A."/>
            <person name="Barry K."/>
            <person name="Detter J.C."/>
            <person name="Glavina del Rio T."/>
            <person name="Hammon N."/>
            <person name="Israni S."/>
            <person name="Dalin E."/>
            <person name="Tice H."/>
            <person name="Pitluck S."/>
            <person name="Kiss H."/>
            <person name="Brettin T."/>
            <person name="Bruce D."/>
            <person name="Han C."/>
            <person name="Tapia R."/>
            <person name="Gilna P."/>
            <person name="Schmutz J."/>
            <person name="Larimer F."/>
            <person name="Land M."/>
            <person name="Hauser L."/>
            <person name="Kyrpides N."/>
            <person name="Mikhailova N."/>
            <person name="Nealson K."/>
            <person name="Konstantinidis K."/>
            <person name="Klappenbach J."/>
            <person name="Tiedje J."/>
            <person name="Richardson P."/>
        </authorList>
    </citation>
    <scope>NUCLEOTIDE SEQUENCE [LARGE SCALE GENOMIC DNA]</scope>
    <source>
        <strain>MR-7</strain>
    </source>
</reference>
<dbReference type="EC" id="2.7.1.30" evidence="1"/>
<dbReference type="EMBL" id="CP000444">
    <property type="protein sequence ID" value="ABI41376.1"/>
    <property type="molecule type" value="Genomic_DNA"/>
</dbReference>
<dbReference type="SMR" id="Q0HZS9"/>
<dbReference type="KEGG" id="shm:Shewmr7_0373"/>
<dbReference type="HOGENOM" id="CLU_009281_2_3_6"/>
<dbReference type="UniPathway" id="UPA00618">
    <property type="reaction ID" value="UER00672"/>
</dbReference>
<dbReference type="GO" id="GO:0005829">
    <property type="term" value="C:cytosol"/>
    <property type="evidence" value="ECO:0007669"/>
    <property type="project" value="TreeGrafter"/>
</dbReference>
<dbReference type="GO" id="GO:0005524">
    <property type="term" value="F:ATP binding"/>
    <property type="evidence" value="ECO:0007669"/>
    <property type="project" value="UniProtKB-UniRule"/>
</dbReference>
<dbReference type="GO" id="GO:0004370">
    <property type="term" value="F:glycerol kinase activity"/>
    <property type="evidence" value="ECO:0000250"/>
    <property type="project" value="UniProtKB"/>
</dbReference>
<dbReference type="GO" id="GO:0019563">
    <property type="term" value="P:glycerol catabolic process"/>
    <property type="evidence" value="ECO:0007669"/>
    <property type="project" value="UniProtKB-UniRule"/>
</dbReference>
<dbReference type="GO" id="GO:0006071">
    <property type="term" value="P:glycerol metabolic process"/>
    <property type="evidence" value="ECO:0000250"/>
    <property type="project" value="UniProtKB"/>
</dbReference>
<dbReference type="GO" id="GO:0006072">
    <property type="term" value="P:glycerol-3-phosphate metabolic process"/>
    <property type="evidence" value="ECO:0007669"/>
    <property type="project" value="InterPro"/>
</dbReference>
<dbReference type="CDD" id="cd07786">
    <property type="entry name" value="FGGY_EcGK_like"/>
    <property type="match status" value="1"/>
</dbReference>
<dbReference type="FunFam" id="3.30.420.40:FF:000007">
    <property type="entry name" value="Glycerol kinase"/>
    <property type="match status" value="1"/>
</dbReference>
<dbReference type="FunFam" id="3.30.420.40:FF:000008">
    <property type="entry name" value="Glycerol kinase"/>
    <property type="match status" value="1"/>
</dbReference>
<dbReference type="Gene3D" id="3.30.420.40">
    <property type="match status" value="2"/>
</dbReference>
<dbReference type="HAMAP" id="MF_00186">
    <property type="entry name" value="Glycerol_kin"/>
    <property type="match status" value="1"/>
</dbReference>
<dbReference type="InterPro" id="IPR043129">
    <property type="entry name" value="ATPase_NBD"/>
</dbReference>
<dbReference type="InterPro" id="IPR000577">
    <property type="entry name" value="Carb_kinase_FGGY"/>
</dbReference>
<dbReference type="InterPro" id="IPR018483">
    <property type="entry name" value="Carb_kinase_FGGY_CS"/>
</dbReference>
<dbReference type="InterPro" id="IPR018485">
    <property type="entry name" value="FGGY_C"/>
</dbReference>
<dbReference type="InterPro" id="IPR018484">
    <property type="entry name" value="FGGY_N"/>
</dbReference>
<dbReference type="InterPro" id="IPR005999">
    <property type="entry name" value="Glycerol_kin"/>
</dbReference>
<dbReference type="NCBIfam" id="TIGR01311">
    <property type="entry name" value="glycerol_kin"/>
    <property type="match status" value="1"/>
</dbReference>
<dbReference type="NCBIfam" id="NF000756">
    <property type="entry name" value="PRK00047.1"/>
    <property type="match status" value="1"/>
</dbReference>
<dbReference type="PANTHER" id="PTHR10196:SF69">
    <property type="entry name" value="GLYCEROL KINASE"/>
    <property type="match status" value="1"/>
</dbReference>
<dbReference type="PANTHER" id="PTHR10196">
    <property type="entry name" value="SUGAR KINASE"/>
    <property type="match status" value="1"/>
</dbReference>
<dbReference type="Pfam" id="PF02782">
    <property type="entry name" value="FGGY_C"/>
    <property type="match status" value="1"/>
</dbReference>
<dbReference type="Pfam" id="PF00370">
    <property type="entry name" value="FGGY_N"/>
    <property type="match status" value="1"/>
</dbReference>
<dbReference type="PIRSF" id="PIRSF000538">
    <property type="entry name" value="GlpK"/>
    <property type="match status" value="1"/>
</dbReference>
<dbReference type="SUPFAM" id="SSF53067">
    <property type="entry name" value="Actin-like ATPase domain"/>
    <property type="match status" value="2"/>
</dbReference>
<dbReference type="PROSITE" id="PS00933">
    <property type="entry name" value="FGGY_KINASES_1"/>
    <property type="match status" value="1"/>
</dbReference>
<dbReference type="PROSITE" id="PS00445">
    <property type="entry name" value="FGGY_KINASES_2"/>
    <property type="match status" value="1"/>
</dbReference>
<proteinExistence type="inferred from homology"/>
<name>GLPK_SHESR</name>
<protein>
    <recommendedName>
        <fullName evidence="1">Glycerol kinase</fullName>
        <ecNumber evidence="1">2.7.1.30</ecNumber>
    </recommendedName>
    <alternativeName>
        <fullName evidence="1">ATP:glycerol 3-phosphotransferase</fullName>
    </alternativeName>
    <alternativeName>
        <fullName evidence="1">Glycerokinase</fullName>
        <shortName evidence="1">GK</shortName>
    </alternativeName>
</protein>
<organism>
    <name type="scientific">Shewanella sp. (strain MR-7)</name>
    <dbReference type="NCBI Taxonomy" id="60481"/>
    <lineage>
        <taxon>Bacteria</taxon>
        <taxon>Pseudomonadati</taxon>
        <taxon>Pseudomonadota</taxon>
        <taxon>Gammaproteobacteria</taxon>
        <taxon>Alteromonadales</taxon>
        <taxon>Shewanellaceae</taxon>
        <taxon>Shewanella</taxon>
    </lineage>
</organism>
<keyword id="KW-0067">ATP-binding</keyword>
<keyword id="KW-0319">Glycerol metabolism</keyword>
<keyword id="KW-0418">Kinase</keyword>
<keyword id="KW-0547">Nucleotide-binding</keyword>
<keyword id="KW-0808">Transferase</keyword>
<comment type="function">
    <text evidence="1">Key enzyme in the regulation of glycerol uptake and metabolism. Catalyzes the phosphorylation of glycerol to yield sn-glycerol 3-phosphate.</text>
</comment>
<comment type="catalytic activity">
    <reaction evidence="1">
        <text>glycerol + ATP = sn-glycerol 3-phosphate + ADP + H(+)</text>
        <dbReference type="Rhea" id="RHEA:21644"/>
        <dbReference type="ChEBI" id="CHEBI:15378"/>
        <dbReference type="ChEBI" id="CHEBI:17754"/>
        <dbReference type="ChEBI" id="CHEBI:30616"/>
        <dbReference type="ChEBI" id="CHEBI:57597"/>
        <dbReference type="ChEBI" id="CHEBI:456216"/>
        <dbReference type="EC" id="2.7.1.30"/>
    </reaction>
</comment>
<comment type="activity regulation">
    <text evidence="1">Inhibited by fructose 1,6-bisphosphate (FBP).</text>
</comment>
<comment type="pathway">
    <text evidence="1">Polyol metabolism; glycerol degradation via glycerol kinase pathway; sn-glycerol 3-phosphate from glycerol: step 1/1.</text>
</comment>
<comment type="similarity">
    <text evidence="1">Belongs to the FGGY kinase family.</text>
</comment>
<gene>
    <name evidence="1" type="primary">glpK</name>
    <name type="ordered locus">Shewmr7_0373</name>
</gene>